<name>EX7L_CLOK5</name>
<protein>
    <recommendedName>
        <fullName evidence="1">Exodeoxyribonuclease 7 large subunit</fullName>
        <ecNumber evidence="1">3.1.11.6</ecNumber>
    </recommendedName>
    <alternativeName>
        <fullName evidence="1">Exodeoxyribonuclease VII large subunit</fullName>
        <shortName evidence="1">Exonuclease VII large subunit</shortName>
    </alternativeName>
</protein>
<gene>
    <name evidence="1" type="primary">xseA</name>
    <name type="ordered locus">CKL_1228</name>
</gene>
<accession>A5N7I9</accession>
<dbReference type="EC" id="3.1.11.6" evidence="1"/>
<dbReference type="EMBL" id="CP000673">
    <property type="protein sequence ID" value="EDK33270.1"/>
    <property type="molecule type" value="Genomic_DNA"/>
</dbReference>
<dbReference type="RefSeq" id="WP_012101611.1">
    <property type="nucleotide sequence ID" value="NC_009706.1"/>
</dbReference>
<dbReference type="SMR" id="A5N7I9"/>
<dbReference type="STRING" id="431943.CKL_1228"/>
<dbReference type="KEGG" id="ckl:CKL_1228"/>
<dbReference type="eggNOG" id="COG1570">
    <property type="taxonomic scope" value="Bacteria"/>
</dbReference>
<dbReference type="HOGENOM" id="CLU_023625_2_0_9"/>
<dbReference type="Proteomes" id="UP000002411">
    <property type="component" value="Chromosome"/>
</dbReference>
<dbReference type="GO" id="GO:0005737">
    <property type="term" value="C:cytoplasm"/>
    <property type="evidence" value="ECO:0007669"/>
    <property type="project" value="UniProtKB-SubCell"/>
</dbReference>
<dbReference type="GO" id="GO:0009318">
    <property type="term" value="C:exodeoxyribonuclease VII complex"/>
    <property type="evidence" value="ECO:0007669"/>
    <property type="project" value="InterPro"/>
</dbReference>
<dbReference type="GO" id="GO:0008855">
    <property type="term" value="F:exodeoxyribonuclease VII activity"/>
    <property type="evidence" value="ECO:0007669"/>
    <property type="project" value="UniProtKB-UniRule"/>
</dbReference>
<dbReference type="GO" id="GO:0003676">
    <property type="term" value="F:nucleic acid binding"/>
    <property type="evidence" value="ECO:0007669"/>
    <property type="project" value="InterPro"/>
</dbReference>
<dbReference type="GO" id="GO:0006308">
    <property type="term" value="P:DNA catabolic process"/>
    <property type="evidence" value="ECO:0007669"/>
    <property type="project" value="UniProtKB-UniRule"/>
</dbReference>
<dbReference type="CDD" id="cd04489">
    <property type="entry name" value="ExoVII_LU_OBF"/>
    <property type="match status" value="1"/>
</dbReference>
<dbReference type="HAMAP" id="MF_00378">
    <property type="entry name" value="Exonuc_7_L"/>
    <property type="match status" value="1"/>
</dbReference>
<dbReference type="InterPro" id="IPR003753">
    <property type="entry name" value="Exonuc_VII_L"/>
</dbReference>
<dbReference type="InterPro" id="IPR020579">
    <property type="entry name" value="Exonuc_VII_lsu_C"/>
</dbReference>
<dbReference type="InterPro" id="IPR025824">
    <property type="entry name" value="OB-fold_nuc-bd_dom"/>
</dbReference>
<dbReference type="NCBIfam" id="TIGR00237">
    <property type="entry name" value="xseA"/>
    <property type="match status" value="1"/>
</dbReference>
<dbReference type="PANTHER" id="PTHR30008">
    <property type="entry name" value="EXODEOXYRIBONUCLEASE 7 LARGE SUBUNIT"/>
    <property type="match status" value="1"/>
</dbReference>
<dbReference type="PANTHER" id="PTHR30008:SF0">
    <property type="entry name" value="EXODEOXYRIBONUCLEASE 7 LARGE SUBUNIT"/>
    <property type="match status" value="1"/>
</dbReference>
<dbReference type="Pfam" id="PF02601">
    <property type="entry name" value="Exonuc_VII_L"/>
    <property type="match status" value="2"/>
</dbReference>
<dbReference type="Pfam" id="PF13742">
    <property type="entry name" value="tRNA_anti_2"/>
    <property type="match status" value="1"/>
</dbReference>
<feature type="chain" id="PRO_1000079981" description="Exodeoxyribonuclease 7 large subunit">
    <location>
        <begin position="1"/>
        <end position="400"/>
    </location>
</feature>
<comment type="function">
    <text evidence="1">Bidirectionally degrades single-stranded DNA into large acid-insoluble oligonucleotides, which are then degraded further into small acid-soluble oligonucleotides.</text>
</comment>
<comment type="catalytic activity">
    <reaction evidence="1">
        <text>Exonucleolytic cleavage in either 5'- to 3'- or 3'- to 5'-direction to yield nucleoside 5'-phosphates.</text>
        <dbReference type="EC" id="3.1.11.6"/>
    </reaction>
</comment>
<comment type="subunit">
    <text evidence="1">Heterooligomer composed of large and small subunits.</text>
</comment>
<comment type="subcellular location">
    <subcellularLocation>
        <location evidence="1">Cytoplasm</location>
    </subcellularLocation>
</comment>
<comment type="similarity">
    <text evidence="1">Belongs to the XseA family.</text>
</comment>
<organism>
    <name type="scientific">Clostridium kluyveri (strain ATCC 8527 / DSM 555 / NBRC 12016 / NCIMB 10680 / K1)</name>
    <dbReference type="NCBI Taxonomy" id="431943"/>
    <lineage>
        <taxon>Bacteria</taxon>
        <taxon>Bacillati</taxon>
        <taxon>Bacillota</taxon>
        <taxon>Clostridia</taxon>
        <taxon>Eubacteriales</taxon>
        <taxon>Clostridiaceae</taxon>
        <taxon>Clostridium</taxon>
    </lineage>
</organism>
<reference key="1">
    <citation type="journal article" date="2008" name="Proc. Natl. Acad. Sci. U.S.A.">
        <title>The genome of Clostridium kluyveri, a strict anaerobe with unique metabolic features.</title>
        <authorList>
            <person name="Seedorf H."/>
            <person name="Fricke W.F."/>
            <person name="Veith B."/>
            <person name="Brueggemann H."/>
            <person name="Liesegang H."/>
            <person name="Strittmatter A."/>
            <person name="Miethke M."/>
            <person name="Buckel W."/>
            <person name="Hinderberger J."/>
            <person name="Li F."/>
            <person name="Hagemeier C."/>
            <person name="Thauer R.K."/>
            <person name="Gottschalk G."/>
        </authorList>
    </citation>
    <scope>NUCLEOTIDE SEQUENCE [LARGE SCALE GENOMIC DNA]</scope>
    <source>
        <strain>ATCC 8527 / DSM 555 / NBRC 12016 / NCIMB 10680 / K1</strain>
    </source>
</reference>
<proteinExistence type="inferred from homology"/>
<sequence length="400" mass="45366">MYIKTLTVSDINRYIKKTLDNDFILGNCSVKGEVSNFKFHSSGHMYFSLKDKFSKINCIMFKSSVEKLNFMPGDGMKVIVKGRISLYEKEGVYQLYCSEMKPDGMGELYLAFEKLKIELEKKGLFDISHKKKIPLYAKKIGVITSPTGAAVKDIINVTRRRNKKIELLIYPSLVQGTGASDNIIKGIETFNSMEDVELIIIARGGGSIEELWCFNDEKLAEAVYSSKKPIITGVGHEIDYTIVDFVSDMRAPTPSAAAEIGVFSLEEYVQKILNYKNKLYNSVKNTVNDKKNRLAFVKKTLEVNNPLTYIANEYENIDKIKESLNFKIKVIINGKKEKLGKINALLSAHNPLNILNKGYCIIEDEQKNVISSIEELNKKYKVDIIMKDGTSKVELIHYKK</sequence>
<evidence type="ECO:0000255" key="1">
    <source>
        <dbReference type="HAMAP-Rule" id="MF_00378"/>
    </source>
</evidence>
<keyword id="KW-0963">Cytoplasm</keyword>
<keyword id="KW-0269">Exonuclease</keyword>
<keyword id="KW-0378">Hydrolase</keyword>
<keyword id="KW-0540">Nuclease</keyword>
<keyword id="KW-1185">Reference proteome</keyword>